<accession>P59659</accession>
<evidence type="ECO:0000250" key="1"/>
<evidence type="ECO:0000255" key="2">
    <source>
        <dbReference type="PROSITE-ProRule" id="PRU00794"/>
    </source>
</evidence>
<evidence type="ECO:0000305" key="3"/>
<proteinExistence type="inferred from homology"/>
<dbReference type="EC" id="3.6.1.55"/>
<dbReference type="EMBL" id="AE007317">
    <property type="protein sequence ID" value="AAK99858.1"/>
    <property type="molecule type" value="Genomic_DNA"/>
</dbReference>
<dbReference type="RefSeq" id="NP_358648.1">
    <property type="nucleotide sequence ID" value="NC_003098.1"/>
</dbReference>
<dbReference type="RefSeq" id="WP_001135782.1">
    <property type="nucleotide sequence ID" value="NC_003098.1"/>
</dbReference>
<dbReference type="SMR" id="P59659"/>
<dbReference type="STRING" id="171101.spr1054"/>
<dbReference type="KEGG" id="spr:spr1054"/>
<dbReference type="PATRIC" id="fig|171101.6.peg.1146"/>
<dbReference type="eggNOG" id="COG1051">
    <property type="taxonomic scope" value="Bacteria"/>
</dbReference>
<dbReference type="HOGENOM" id="CLU_037162_11_2_9"/>
<dbReference type="Proteomes" id="UP000000586">
    <property type="component" value="Chromosome"/>
</dbReference>
<dbReference type="GO" id="GO:0035539">
    <property type="term" value="F:8-oxo-7,8-dihydrodeoxyguanosine triphosphate pyrophosphatase activity"/>
    <property type="evidence" value="ECO:0007669"/>
    <property type="project" value="UniProtKB-EC"/>
</dbReference>
<dbReference type="GO" id="GO:0008413">
    <property type="term" value="F:8-oxo-7,8-dihydroguanosine triphosphate pyrophosphatase activity"/>
    <property type="evidence" value="ECO:0007669"/>
    <property type="project" value="InterPro"/>
</dbReference>
<dbReference type="GO" id="GO:0046872">
    <property type="term" value="F:metal ion binding"/>
    <property type="evidence" value="ECO:0007669"/>
    <property type="project" value="UniProtKB-KW"/>
</dbReference>
<dbReference type="GO" id="GO:0006281">
    <property type="term" value="P:DNA repair"/>
    <property type="evidence" value="ECO:0007669"/>
    <property type="project" value="UniProtKB-KW"/>
</dbReference>
<dbReference type="GO" id="GO:0006260">
    <property type="term" value="P:DNA replication"/>
    <property type="evidence" value="ECO:0007669"/>
    <property type="project" value="UniProtKB-KW"/>
</dbReference>
<dbReference type="CDD" id="cd18886">
    <property type="entry name" value="NUDIX_MutT_Nudt1"/>
    <property type="match status" value="1"/>
</dbReference>
<dbReference type="FunFam" id="3.90.79.10:FF:000029">
    <property type="entry name" value="Mutator mutT protein"/>
    <property type="match status" value="1"/>
</dbReference>
<dbReference type="Gene3D" id="3.90.79.10">
    <property type="entry name" value="Nucleoside Triphosphate Pyrophosphohydrolase"/>
    <property type="match status" value="1"/>
</dbReference>
<dbReference type="InterPro" id="IPR003562">
    <property type="entry name" value="Mutator_MutX_prot"/>
</dbReference>
<dbReference type="InterPro" id="IPR020476">
    <property type="entry name" value="Nudix_hydrolase"/>
</dbReference>
<dbReference type="InterPro" id="IPR015797">
    <property type="entry name" value="NUDIX_hydrolase-like_dom_sf"/>
</dbReference>
<dbReference type="InterPro" id="IPR020084">
    <property type="entry name" value="NUDIX_hydrolase_CS"/>
</dbReference>
<dbReference type="InterPro" id="IPR000086">
    <property type="entry name" value="NUDIX_hydrolase_dom"/>
</dbReference>
<dbReference type="PANTHER" id="PTHR43758">
    <property type="entry name" value="7,8-DIHYDRO-8-OXOGUANINE TRIPHOSPHATASE"/>
    <property type="match status" value="1"/>
</dbReference>
<dbReference type="PANTHER" id="PTHR43758:SF2">
    <property type="entry name" value="OXIDIZED PURINE NUCLEOSIDE TRIPHOSPHATE HYDROLASE"/>
    <property type="match status" value="1"/>
</dbReference>
<dbReference type="Pfam" id="PF00293">
    <property type="entry name" value="NUDIX"/>
    <property type="match status" value="1"/>
</dbReference>
<dbReference type="PRINTS" id="PR01402">
    <property type="entry name" value="MUTATORMUTX"/>
</dbReference>
<dbReference type="PRINTS" id="PR00502">
    <property type="entry name" value="NUDIXFAMILY"/>
</dbReference>
<dbReference type="SUPFAM" id="SSF55811">
    <property type="entry name" value="Nudix"/>
    <property type="match status" value="1"/>
</dbReference>
<dbReference type="PROSITE" id="PS51462">
    <property type="entry name" value="NUDIX"/>
    <property type="match status" value="1"/>
</dbReference>
<dbReference type="PROSITE" id="PS00893">
    <property type="entry name" value="NUDIX_BOX"/>
    <property type="match status" value="1"/>
</dbReference>
<organism>
    <name type="scientific">Streptococcus pneumoniae (strain ATCC BAA-255 / R6)</name>
    <dbReference type="NCBI Taxonomy" id="171101"/>
    <lineage>
        <taxon>Bacteria</taxon>
        <taxon>Bacillati</taxon>
        <taxon>Bacillota</taxon>
        <taxon>Bacilli</taxon>
        <taxon>Lactobacillales</taxon>
        <taxon>Streptococcaceae</taxon>
        <taxon>Streptococcus</taxon>
    </lineage>
</organism>
<gene>
    <name type="primary">mutX</name>
    <name type="ordered locus">spr1054</name>
</gene>
<feature type="chain" id="PRO_0000056949" description="8-oxo-dGTP diphosphatase">
    <location>
        <begin position="1"/>
        <end position="154"/>
    </location>
</feature>
<feature type="domain" description="Nudix hydrolase" evidence="2">
    <location>
        <begin position="1"/>
        <end position="129"/>
    </location>
</feature>
<feature type="short sequence motif" description="Nudix box">
    <location>
        <begin position="38"/>
        <end position="59"/>
    </location>
</feature>
<feature type="binding site" evidence="1">
    <location>
        <position position="38"/>
    </location>
    <ligand>
        <name>Mg(2+)</name>
        <dbReference type="ChEBI" id="CHEBI:18420"/>
    </ligand>
</feature>
<feature type="binding site" evidence="1">
    <location>
        <position position="53"/>
    </location>
    <ligand>
        <name>Mg(2+)</name>
        <dbReference type="ChEBI" id="CHEBI:18420"/>
    </ligand>
</feature>
<feature type="binding site" evidence="1">
    <location>
        <position position="56"/>
    </location>
    <ligand>
        <name>Mg(2+)</name>
        <dbReference type="ChEBI" id="CHEBI:18420"/>
    </ligand>
</feature>
<feature type="binding site" evidence="1">
    <location>
        <position position="57"/>
    </location>
    <ligand>
        <name>Mg(2+)</name>
        <dbReference type="ChEBI" id="CHEBI:18420"/>
    </ligand>
</feature>
<keyword id="KW-0227">DNA damage</keyword>
<keyword id="KW-0234">DNA repair</keyword>
<keyword id="KW-0235">DNA replication</keyword>
<keyword id="KW-0378">Hydrolase</keyword>
<keyword id="KW-0460">Magnesium</keyword>
<keyword id="KW-0479">Metal-binding</keyword>
<keyword id="KW-0515">Mutator protein</keyword>
<keyword id="KW-1185">Reference proteome</keyword>
<protein>
    <recommendedName>
        <fullName>8-oxo-dGTP diphosphatase</fullName>
        <shortName>8-oxo-dGTPase</shortName>
        <ecNumber>3.6.1.55</ecNumber>
    </recommendedName>
    <alternativeName>
        <fullName>7,8-dihydro-8-oxoguanine-triphosphatase</fullName>
    </alternativeName>
    <alternativeName>
        <fullName>Mutator protein MutT</fullName>
    </alternativeName>
    <alternativeName>
        <fullName>dGTP pyrophosphohydrolase</fullName>
    </alternativeName>
</protein>
<reference key="1">
    <citation type="journal article" date="2001" name="J. Bacteriol.">
        <title>Genome of the bacterium Streptococcus pneumoniae strain R6.</title>
        <authorList>
            <person name="Hoskins J."/>
            <person name="Alborn W.E. Jr."/>
            <person name="Arnold J."/>
            <person name="Blaszczak L.C."/>
            <person name="Burgett S."/>
            <person name="DeHoff B.S."/>
            <person name="Estrem S.T."/>
            <person name="Fritz L."/>
            <person name="Fu D.-J."/>
            <person name="Fuller W."/>
            <person name="Geringer C."/>
            <person name="Gilmour R."/>
            <person name="Glass J.S."/>
            <person name="Khoja H."/>
            <person name="Kraft A.R."/>
            <person name="Lagace R.E."/>
            <person name="LeBlanc D.J."/>
            <person name="Lee L.N."/>
            <person name="Lefkowitz E.J."/>
            <person name="Lu J."/>
            <person name="Matsushima P."/>
            <person name="McAhren S.M."/>
            <person name="McHenney M."/>
            <person name="McLeaster K."/>
            <person name="Mundy C.W."/>
            <person name="Nicas T.I."/>
            <person name="Norris F.H."/>
            <person name="O'Gara M."/>
            <person name="Peery R.B."/>
            <person name="Robertson G.T."/>
            <person name="Rockey P."/>
            <person name="Sun P.-M."/>
            <person name="Winkler M.E."/>
            <person name="Yang Y."/>
            <person name="Young-Bellido M."/>
            <person name="Zhao G."/>
            <person name="Zook C.A."/>
            <person name="Baltz R.H."/>
            <person name="Jaskunas S.R."/>
            <person name="Rosteck P.R. Jr."/>
            <person name="Skatrud P.L."/>
            <person name="Glass J.I."/>
        </authorList>
    </citation>
    <scope>NUCLEOTIDE SEQUENCE [LARGE SCALE GENOMIC DNA]</scope>
    <source>
        <strain>ATCC BAA-255 / R6</strain>
    </source>
</reference>
<comment type="function">
    <text evidence="1">Involved in the DNA repair system to avoid A.T to G.C transversions. Degrades 8-oxo-dGTP to the monophosphate, but is also active on all of the nucleoside triphosphates (By similarity).</text>
</comment>
<comment type="catalytic activity">
    <reaction>
        <text>8-oxo-dGTP + H2O = 8-oxo-dGMP + diphosphate + H(+)</text>
        <dbReference type="Rhea" id="RHEA:31575"/>
        <dbReference type="ChEBI" id="CHEBI:15377"/>
        <dbReference type="ChEBI" id="CHEBI:15378"/>
        <dbReference type="ChEBI" id="CHEBI:33019"/>
        <dbReference type="ChEBI" id="CHEBI:63224"/>
        <dbReference type="ChEBI" id="CHEBI:77896"/>
        <dbReference type="EC" id="3.6.1.55"/>
    </reaction>
</comment>
<comment type="cofactor">
    <cofactor evidence="1">
        <name>Mg(2+)</name>
        <dbReference type="ChEBI" id="CHEBI:18420"/>
    </cofactor>
</comment>
<comment type="subunit">
    <text evidence="1">Homotrimer.</text>
</comment>
<comment type="similarity">
    <text evidence="3">Belongs to the Nudix hydrolase family.</text>
</comment>
<name>MUTX_STRR6</name>
<sequence length="154" mass="17870">MPQLATICYIDNGKELLMLHRNKKPNDVHEGKWIGVGGKLERGETPQECAVREILEETGLKAKPVLKGVITFPEFTPDLDWYTYVFKVTEFEGDLIDCNEGMLEWVPYDEVLSKPTWEGDHTFVEWLLEDKPFFSAKFVYDGDKLLDTQVDFYE</sequence>